<reference key="1">
    <citation type="journal article" date="1987" name="Nature">
        <title>Finger protein of novel structure encoded by hunchback, a second member of the gap class of Drosophila segmentation genes.</title>
        <authorList>
            <person name="Tautz D."/>
            <person name="Lehmann R."/>
            <person name="Schnuerch H."/>
            <person name="Schuh R."/>
            <person name="Seifert E."/>
            <person name="Kienlin A."/>
            <person name="Jones K."/>
            <person name="Jaeckle H."/>
        </authorList>
    </citation>
    <scope>NUCLEOTIDE SEQUENCE [GENOMIC DNA]</scope>
    <source>
        <strain>Oregon-R</strain>
        <tissue>Embryo</tissue>
    </source>
</reference>
<reference key="2">
    <citation type="submission" date="1998-04" db="EMBL/GenBank/DDBJ databases">
        <authorList>
            <person name="Tautz D."/>
        </authorList>
    </citation>
    <scope>SEQUENCE REVISION TO 525</scope>
</reference>
<reference key="3">
    <citation type="journal article" date="1994" name="Dev. Biol.">
        <title>A small region surrounding the distal promoter of the hunchback gene directs maternal expression.</title>
        <authorList>
            <person name="Margolis J.S."/>
            <person name="Borowsky M."/>
            <person name="Shim C.W."/>
            <person name="Posakony J.W."/>
        </authorList>
    </citation>
    <scope>NUCLEOTIDE SEQUENCE [GENOMIC DNA]</scope>
    <scope>TISSUE SPECIFICITY</scope>
</reference>
<reference key="4">
    <citation type="journal article" date="2000" name="Science">
        <title>The genome sequence of Drosophila melanogaster.</title>
        <authorList>
            <person name="Adams M.D."/>
            <person name="Celniker S.E."/>
            <person name="Holt R.A."/>
            <person name="Evans C.A."/>
            <person name="Gocayne J.D."/>
            <person name="Amanatides P.G."/>
            <person name="Scherer S.E."/>
            <person name="Li P.W."/>
            <person name="Hoskins R.A."/>
            <person name="Galle R.F."/>
            <person name="George R.A."/>
            <person name="Lewis S.E."/>
            <person name="Richards S."/>
            <person name="Ashburner M."/>
            <person name="Henderson S.N."/>
            <person name="Sutton G.G."/>
            <person name="Wortman J.R."/>
            <person name="Yandell M.D."/>
            <person name="Zhang Q."/>
            <person name="Chen L.X."/>
            <person name="Brandon R.C."/>
            <person name="Rogers Y.-H.C."/>
            <person name="Blazej R.G."/>
            <person name="Champe M."/>
            <person name="Pfeiffer B.D."/>
            <person name="Wan K.H."/>
            <person name="Doyle C."/>
            <person name="Baxter E.G."/>
            <person name="Helt G."/>
            <person name="Nelson C.R."/>
            <person name="Miklos G.L.G."/>
            <person name="Abril J.F."/>
            <person name="Agbayani A."/>
            <person name="An H.-J."/>
            <person name="Andrews-Pfannkoch C."/>
            <person name="Baldwin D."/>
            <person name="Ballew R.M."/>
            <person name="Basu A."/>
            <person name="Baxendale J."/>
            <person name="Bayraktaroglu L."/>
            <person name="Beasley E.M."/>
            <person name="Beeson K.Y."/>
            <person name="Benos P.V."/>
            <person name="Berman B.P."/>
            <person name="Bhandari D."/>
            <person name="Bolshakov S."/>
            <person name="Borkova D."/>
            <person name="Botchan M.R."/>
            <person name="Bouck J."/>
            <person name="Brokstein P."/>
            <person name="Brottier P."/>
            <person name="Burtis K.C."/>
            <person name="Busam D.A."/>
            <person name="Butler H."/>
            <person name="Cadieu E."/>
            <person name="Center A."/>
            <person name="Chandra I."/>
            <person name="Cherry J.M."/>
            <person name="Cawley S."/>
            <person name="Dahlke C."/>
            <person name="Davenport L.B."/>
            <person name="Davies P."/>
            <person name="de Pablos B."/>
            <person name="Delcher A."/>
            <person name="Deng Z."/>
            <person name="Mays A.D."/>
            <person name="Dew I."/>
            <person name="Dietz S.M."/>
            <person name="Dodson K."/>
            <person name="Doup L.E."/>
            <person name="Downes M."/>
            <person name="Dugan-Rocha S."/>
            <person name="Dunkov B.C."/>
            <person name="Dunn P."/>
            <person name="Durbin K.J."/>
            <person name="Evangelista C.C."/>
            <person name="Ferraz C."/>
            <person name="Ferriera S."/>
            <person name="Fleischmann W."/>
            <person name="Fosler C."/>
            <person name="Gabrielian A.E."/>
            <person name="Garg N.S."/>
            <person name="Gelbart W.M."/>
            <person name="Glasser K."/>
            <person name="Glodek A."/>
            <person name="Gong F."/>
            <person name="Gorrell J.H."/>
            <person name="Gu Z."/>
            <person name="Guan P."/>
            <person name="Harris M."/>
            <person name="Harris N.L."/>
            <person name="Harvey D.A."/>
            <person name="Heiman T.J."/>
            <person name="Hernandez J.R."/>
            <person name="Houck J."/>
            <person name="Hostin D."/>
            <person name="Houston K.A."/>
            <person name="Howland T.J."/>
            <person name="Wei M.-H."/>
            <person name="Ibegwam C."/>
            <person name="Jalali M."/>
            <person name="Kalush F."/>
            <person name="Karpen G.H."/>
            <person name="Ke Z."/>
            <person name="Kennison J.A."/>
            <person name="Ketchum K.A."/>
            <person name="Kimmel B.E."/>
            <person name="Kodira C.D."/>
            <person name="Kraft C.L."/>
            <person name="Kravitz S."/>
            <person name="Kulp D."/>
            <person name="Lai Z."/>
            <person name="Lasko P."/>
            <person name="Lei Y."/>
            <person name="Levitsky A.A."/>
            <person name="Li J.H."/>
            <person name="Li Z."/>
            <person name="Liang Y."/>
            <person name="Lin X."/>
            <person name="Liu X."/>
            <person name="Mattei B."/>
            <person name="McIntosh T.C."/>
            <person name="McLeod M.P."/>
            <person name="McPherson D."/>
            <person name="Merkulov G."/>
            <person name="Milshina N.V."/>
            <person name="Mobarry C."/>
            <person name="Morris J."/>
            <person name="Moshrefi A."/>
            <person name="Mount S.M."/>
            <person name="Moy M."/>
            <person name="Murphy B."/>
            <person name="Murphy L."/>
            <person name="Muzny D.M."/>
            <person name="Nelson D.L."/>
            <person name="Nelson D.R."/>
            <person name="Nelson K.A."/>
            <person name="Nixon K."/>
            <person name="Nusskern D.R."/>
            <person name="Pacleb J.M."/>
            <person name="Palazzolo M."/>
            <person name="Pittman G.S."/>
            <person name="Pan S."/>
            <person name="Pollard J."/>
            <person name="Puri V."/>
            <person name="Reese M.G."/>
            <person name="Reinert K."/>
            <person name="Remington K."/>
            <person name="Saunders R.D.C."/>
            <person name="Scheeler F."/>
            <person name="Shen H."/>
            <person name="Shue B.C."/>
            <person name="Siden-Kiamos I."/>
            <person name="Simpson M."/>
            <person name="Skupski M.P."/>
            <person name="Smith T.J."/>
            <person name="Spier E."/>
            <person name="Spradling A.C."/>
            <person name="Stapleton M."/>
            <person name="Strong R."/>
            <person name="Sun E."/>
            <person name="Svirskas R."/>
            <person name="Tector C."/>
            <person name="Turner R."/>
            <person name="Venter E."/>
            <person name="Wang A.H."/>
            <person name="Wang X."/>
            <person name="Wang Z.-Y."/>
            <person name="Wassarman D.A."/>
            <person name="Weinstock G.M."/>
            <person name="Weissenbach J."/>
            <person name="Williams S.M."/>
            <person name="Woodage T."/>
            <person name="Worley K.C."/>
            <person name="Wu D."/>
            <person name="Yang S."/>
            <person name="Yao Q.A."/>
            <person name="Ye J."/>
            <person name="Yeh R.-F."/>
            <person name="Zaveri J.S."/>
            <person name="Zhan M."/>
            <person name="Zhang G."/>
            <person name="Zhao Q."/>
            <person name="Zheng L."/>
            <person name="Zheng X.H."/>
            <person name="Zhong F.N."/>
            <person name="Zhong W."/>
            <person name="Zhou X."/>
            <person name="Zhu S.C."/>
            <person name="Zhu X."/>
            <person name="Smith H.O."/>
            <person name="Gibbs R.A."/>
            <person name="Myers E.W."/>
            <person name="Rubin G.M."/>
            <person name="Venter J.C."/>
        </authorList>
    </citation>
    <scope>NUCLEOTIDE SEQUENCE [LARGE SCALE GENOMIC DNA]</scope>
    <source>
        <strain>Berkeley</strain>
    </source>
</reference>
<reference key="5">
    <citation type="journal article" date="2002" name="Genome Biol.">
        <title>Annotation of the Drosophila melanogaster euchromatic genome: a systematic review.</title>
        <authorList>
            <person name="Misra S."/>
            <person name="Crosby M.A."/>
            <person name="Mungall C.J."/>
            <person name="Matthews B.B."/>
            <person name="Campbell K.S."/>
            <person name="Hradecky P."/>
            <person name="Huang Y."/>
            <person name="Kaminker J.S."/>
            <person name="Millburn G.H."/>
            <person name="Prochnik S.E."/>
            <person name="Smith C.D."/>
            <person name="Tupy J.L."/>
            <person name="Whitfield E.J."/>
            <person name="Bayraktaroglu L."/>
            <person name="Berman B.P."/>
            <person name="Bettencourt B.R."/>
            <person name="Celniker S.E."/>
            <person name="de Grey A.D.N.J."/>
            <person name="Drysdale R.A."/>
            <person name="Harris N.L."/>
            <person name="Richter J."/>
            <person name="Russo S."/>
            <person name="Schroeder A.J."/>
            <person name="Shu S.Q."/>
            <person name="Stapleton M."/>
            <person name="Yamada C."/>
            <person name="Ashburner M."/>
            <person name="Gelbart W.M."/>
            <person name="Rubin G.M."/>
            <person name="Lewis S.E."/>
        </authorList>
    </citation>
    <scope>GENOME REANNOTATION</scope>
    <source>
        <strain>Berkeley</strain>
    </source>
</reference>
<reference key="6">
    <citation type="submission" date="2006-01" db="EMBL/GenBank/DDBJ databases">
        <authorList>
            <person name="Stapleton M."/>
            <person name="Carlson J.W."/>
            <person name="Chavez C."/>
            <person name="Frise E."/>
            <person name="George R.A."/>
            <person name="Pacleb J.M."/>
            <person name="Park S."/>
            <person name="Wan K.H."/>
            <person name="Yu C."/>
            <person name="Celniker S.E."/>
        </authorList>
    </citation>
    <scope>NUCLEOTIDE SEQUENCE [LARGE SCALE MRNA]</scope>
    <source>
        <strain>Berkeley</strain>
        <tissue>Embryo</tissue>
    </source>
</reference>
<reference key="7">
    <citation type="journal article" date="1992" name="Proc. Natl. Acad. Sci. U.S.A.">
        <title>Evolutionary conservation pattern of zinc-finger domains of Drosophila segmentation genes.</title>
        <authorList>
            <person name="Sommer R.J."/>
            <person name="Retzlaff M."/>
            <person name="Goerlich K."/>
            <person name="Sander K."/>
            <person name="Tautz D."/>
        </authorList>
    </citation>
    <scope>NUCLEOTIDE SEQUENCE [GENOMIC DNA] OF 281-349</scope>
</reference>
<reference key="8">
    <citation type="journal article" date="2002" name="Genome Biol.">
        <title>A Drosophila full-length cDNA resource.</title>
        <authorList>
            <person name="Stapleton M."/>
            <person name="Carlson J.W."/>
            <person name="Brokstein P."/>
            <person name="Yu C."/>
            <person name="Champe M."/>
            <person name="George R.A."/>
            <person name="Guarin H."/>
            <person name="Kronmiller B."/>
            <person name="Pacleb J.M."/>
            <person name="Park S."/>
            <person name="Wan K.H."/>
            <person name="Rubin G.M."/>
            <person name="Celniker S.E."/>
        </authorList>
    </citation>
    <scope>NUCLEOTIDE SEQUENCE [LARGE SCALE MRNA] OF 287-758</scope>
    <source>
        <strain>Berkeley</strain>
        <tissue>Embryo</tissue>
    </source>
</reference>
<reference key="9">
    <citation type="journal article" date="1998" name="Mol. Biol. Evol.">
        <title>Microevolutionary divergence pattern of the segmentation gene hunchback in Drosophila.</title>
        <authorList>
            <person name="Tautz D."/>
            <person name="Nigro L."/>
        </authorList>
    </citation>
    <scope>POLYMORPHISM</scope>
</reference>
<reference key="10">
    <citation type="journal article" date="2008" name="J. Proteome Res.">
        <title>Phosphoproteome analysis of Drosophila melanogaster embryos.</title>
        <authorList>
            <person name="Zhai B."/>
            <person name="Villen J."/>
            <person name="Beausoleil S.A."/>
            <person name="Mintseris J."/>
            <person name="Gygi S.P."/>
        </authorList>
    </citation>
    <scope>PHOSPHORYLATION [LARGE SCALE ANALYSIS] AT THR-178; SER-188; SER-207; SER-209; SER-210; SER-537 AND SER-540</scope>
    <scope>IDENTIFICATION BY MASS SPECTROMETRY</scope>
    <source>
        <tissue>Embryo</tissue>
    </source>
</reference>
<organism>
    <name type="scientific">Drosophila melanogaster</name>
    <name type="common">Fruit fly</name>
    <dbReference type="NCBI Taxonomy" id="7227"/>
    <lineage>
        <taxon>Eukaryota</taxon>
        <taxon>Metazoa</taxon>
        <taxon>Ecdysozoa</taxon>
        <taxon>Arthropoda</taxon>
        <taxon>Hexapoda</taxon>
        <taxon>Insecta</taxon>
        <taxon>Pterygota</taxon>
        <taxon>Neoptera</taxon>
        <taxon>Endopterygota</taxon>
        <taxon>Diptera</taxon>
        <taxon>Brachycera</taxon>
        <taxon>Muscomorpha</taxon>
        <taxon>Ephydroidea</taxon>
        <taxon>Drosophilidae</taxon>
        <taxon>Drosophila</taxon>
        <taxon>Sophophora</taxon>
    </lineage>
</organism>
<name>HUNB_DROME</name>
<feature type="chain" id="PRO_0000046948" description="Protein hunchback">
    <location>
        <begin position="1"/>
        <end position="758"/>
    </location>
</feature>
<feature type="zinc finger region" description="C2H2-type 1" evidence="1">
    <location>
        <begin position="240"/>
        <end position="262"/>
    </location>
</feature>
<feature type="zinc finger region" description="C2H2-type 2" evidence="1">
    <location>
        <begin position="269"/>
        <end position="291"/>
    </location>
</feature>
<feature type="zinc finger region" description="C2H2-type 3" evidence="1">
    <location>
        <begin position="297"/>
        <end position="319"/>
    </location>
</feature>
<feature type="zinc finger region" description="C2H2-type 4" evidence="1">
    <location>
        <begin position="325"/>
        <end position="349"/>
    </location>
</feature>
<feature type="zinc finger region" description="C2H2-type 5" evidence="1">
    <location>
        <begin position="705"/>
        <end position="727"/>
    </location>
</feature>
<feature type="zinc finger region" description="C2H2-type 6" evidence="1">
    <location>
        <begin position="733"/>
        <end position="757"/>
    </location>
</feature>
<feature type="region of interest" description="Disordered" evidence="2">
    <location>
        <begin position="30"/>
        <end position="51"/>
    </location>
</feature>
<feature type="region of interest" description="Disordered" evidence="2">
    <location>
        <begin position="172"/>
        <end position="214"/>
    </location>
</feature>
<feature type="region of interest" description="Disordered" evidence="2">
    <location>
        <begin position="365"/>
        <end position="416"/>
    </location>
</feature>
<feature type="region of interest" description="Disordered" evidence="2">
    <location>
        <begin position="513"/>
        <end position="536"/>
    </location>
</feature>
<feature type="region of interest" description="Disordered" evidence="2">
    <location>
        <begin position="603"/>
        <end position="695"/>
    </location>
</feature>
<feature type="compositionally biased region" description="Polar residues" evidence="2">
    <location>
        <begin position="39"/>
        <end position="51"/>
    </location>
</feature>
<feature type="compositionally biased region" description="Basic and acidic residues" evidence="2">
    <location>
        <begin position="198"/>
        <end position="214"/>
    </location>
</feature>
<feature type="compositionally biased region" description="Low complexity" evidence="2">
    <location>
        <begin position="398"/>
        <end position="415"/>
    </location>
</feature>
<feature type="compositionally biased region" description="Low complexity" evidence="2">
    <location>
        <begin position="513"/>
        <end position="522"/>
    </location>
</feature>
<feature type="compositionally biased region" description="Acidic residues" evidence="2">
    <location>
        <begin position="523"/>
        <end position="532"/>
    </location>
</feature>
<feature type="compositionally biased region" description="Low complexity" evidence="2">
    <location>
        <begin position="652"/>
        <end position="695"/>
    </location>
</feature>
<feature type="modified residue" description="Phosphothreonine" evidence="3">
    <location>
        <position position="178"/>
    </location>
</feature>
<feature type="modified residue" description="Phosphoserine" evidence="3">
    <location>
        <position position="188"/>
    </location>
</feature>
<feature type="modified residue" description="Phosphoserine" evidence="3">
    <location>
        <position position="207"/>
    </location>
</feature>
<feature type="modified residue" description="Phosphoserine" evidence="3">
    <location>
        <position position="209"/>
    </location>
</feature>
<feature type="modified residue" description="Phosphoserine" evidence="3">
    <location>
        <position position="210"/>
    </location>
</feature>
<feature type="modified residue" description="Phosphoserine" evidence="3">
    <location>
        <position position="537"/>
    </location>
</feature>
<feature type="modified residue" description="Phosphoserine" evidence="3">
    <location>
        <position position="540"/>
    </location>
</feature>
<feature type="sequence variant">
    <original>A</original>
    <variation>P</variation>
    <location>
        <position position="437"/>
    </location>
</feature>
<feature type="sequence variant">
    <original>V</original>
    <variation>M</variation>
    <location>
        <position position="649"/>
    </location>
</feature>
<protein>
    <recommendedName>
        <fullName evidence="5">Protein hunchback</fullName>
    </recommendedName>
</protein>
<keyword id="KW-0217">Developmental protein</keyword>
<keyword id="KW-0238">DNA-binding</keyword>
<keyword id="KW-0302">Gap protein</keyword>
<keyword id="KW-0479">Metal-binding</keyword>
<keyword id="KW-0539">Nucleus</keyword>
<keyword id="KW-0597">Phosphoprotein</keyword>
<keyword id="KW-1185">Reference proteome</keyword>
<keyword id="KW-0677">Repeat</keyword>
<keyword id="KW-0862">Zinc</keyword>
<keyword id="KW-0863">Zinc-finger</keyword>
<evidence type="ECO:0000255" key="1">
    <source>
        <dbReference type="PROSITE-ProRule" id="PRU00042"/>
    </source>
</evidence>
<evidence type="ECO:0000256" key="2">
    <source>
        <dbReference type="SAM" id="MobiDB-lite"/>
    </source>
</evidence>
<evidence type="ECO:0000269" key="3">
    <source>
    </source>
</evidence>
<evidence type="ECO:0000269" key="4">
    <source>
    </source>
</evidence>
<evidence type="ECO:0000303" key="5">
    <source>
    </source>
</evidence>
<evidence type="ECO:0000305" key="6"/>
<evidence type="ECO:0000312" key="7">
    <source>
        <dbReference type="FlyBase" id="FBgn0001180"/>
    </source>
</evidence>
<accession>P05084</accession>
<accession>Q24018</accession>
<accession>Q29R06</accession>
<accession>Q960U7</accession>
<gene>
    <name evidence="5 7" type="primary">hb</name>
    <name evidence="7" type="ORF">CG9786</name>
</gene>
<proteinExistence type="evidence at protein level"/>
<sequence>MQNWETTATTNYEQHNAWYNSMFAANIKQEPGHHLDGNSVASSPRQSPIPSTNHLEQFLKQQQQQLQQQPMDTLCAMTPSPSQNDQNSLQHYDANLQQQLLQQQQYQQHFQAAQQQHHHHHHLMGGFNPLTPPGLPNPMQHFYGGNLRPSPQPTPTSASTIAPVAVATGSSEKLQALTPPMDVTPPKSPAKSSQSNIEPEKEHDQMSNSSEDMKYMAESEDDDTNIRMPIYNSHGKMKNYKCKTCGVVAITKVDFWAHTRTHMKPDKILQCPKCPFVTEFKHHLEYHIRKHKNQKPFQCDKCSYTCVNKSMLNSHRKSHSSVYQYRCADCDYATKYCHSFKLHLRKYGHKPGMVLDEDGTPNPSLVIDVYGTRRGPKSKNGGPIASGGSGSGSRKSNVAAVAPQQQQSQPAQPVATSQLSAALQGFPLVQGNSAPPAASPVLPLPASPAKSVASVEQTPSLPSPANLLPPLASLLQQNRNMAFFPYWNLNLQMLAAQQQAAVLAQLSPRMREQLQQQNQQQSDNEEEEQDDEYERKSVDSAMDLSQGTPVKEDEQQQQPQQPLAMNLKVEEEATPLMSSSNASRRKGRVLKLDTLLQLRSEAMTSPEQLKVPSTPMPTASSPIAGRKPMPEEHCSGTSSADESMETAHVPQANTSASSTASSSGNSSNASSNSNGNSSSNSSSNGTTSAVAAPPSGTPAAAGAIYECKYCDIFFKDAVLYTIHMGYHSCDDVFKCNMCGEKCDGPVGLFVHMARNAHS</sequence>
<dbReference type="EMBL" id="Y00274">
    <property type="protein sequence ID" value="CAA68377.1"/>
    <property type="molecule type" value="Genomic_DNA"/>
</dbReference>
<dbReference type="EMBL" id="U17742">
    <property type="protein sequence ID" value="AAB60232.1"/>
    <property type="molecule type" value="Genomic_DNA"/>
</dbReference>
<dbReference type="EMBL" id="AE014297">
    <property type="protein sequence ID" value="AAN13395.1"/>
    <property type="molecule type" value="Genomic_DNA"/>
</dbReference>
<dbReference type="EMBL" id="BT024234">
    <property type="protein sequence ID" value="ABC86296.1"/>
    <property type="molecule type" value="mRNA"/>
</dbReference>
<dbReference type="EMBL" id="AY051838">
    <property type="protein sequence ID" value="AAK93262.1"/>
    <property type="molecule type" value="mRNA"/>
</dbReference>
<dbReference type="PIR" id="A93395">
    <property type="entry name" value="A29253"/>
</dbReference>
<dbReference type="RefSeq" id="NP_731267.1">
    <property type="nucleotide sequence ID" value="NM_169233.2"/>
</dbReference>
<dbReference type="RefSeq" id="NP_731268.1">
    <property type="nucleotide sequence ID" value="NM_169234.2"/>
</dbReference>
<dbReference type="BioGRID" id="66207">
    <property type="interactions" value="25"/>
</dbReference>
<dbReference type="DIP" id="DIP-17417N"/>
<dbReference type="FunCoup" id="P05084">
    <property type="interactions" value="105"/>
</dbReference>
<dbReference type="IntAct" id="P05084">
    <property type="interactions" value="7"/>
</dbReference>
<dbReference type="STRING" id="7227.FBpp0081432"/>
<dbReference type="GlyGen" id="P05084">
    <property type="glycosylation" value="5 sites"/>
</dbReference>
<dbReference type="iPTMnet" id="P05084"/>
<dbReference type="PaxDb" id="7227-FBpp0081431"/>
<dbReference type="DNASU" id="41032"/>
<dbReference type="EnsemblMetazoa" id="FBtr0081950">
    <property type="protein sequence ID" value="FBpp0081431"/>
    <property type="gene ID" value="FBgn0001180"/>
</dbReference>
<dbReference type="EnsemblMetazoa" id="FBtr0081951">
    <property type="protein sequence ID" value="FBpp0081432"/>
    <property type="gene ID" value="FBgn0001180"/>
</dbReference>
<dbReference type="GeneID" id="41032"/>
<dbReference type="KEGG" id="dme:Dmel_CG9786"/>
<dbReference type="UCSC" id="CG9786-RA">
    <property type="organism name" value="d. melanogaster"/>
</dbReference>
<dbReference type="AGR" id="FB:FBgn0001180"/>
<dbReference type="CTD" id="15120"/>
<dbReference type="FlyBase" id="FBgn0001180">
    <property type="gene designation" value="hb"/>
</dbReference>
<dbReference type="VEuPathDB" id="VectorBase:FBgn0001180"/>
<dbReference type="eggNOG" id="KOG1721">
    <property type="taxonomic scope" value="Eukaryota"/>
</dbReference>
<dbReference type="GeneTree" id="ENSGT00940000171732"/>
<dbReference type="HOGENOM" id="CLU_021336_0_0_1"/>
<dbReference type="InParanoid" id="P05084"/>
<dbReference type="OMA" id="LPEEHCS"/>
<dbReference type="OrthoDB" id="10015593at2759"/>
<dbReference type="PhylomeDB" id="P05084"/>
<dbReference type="SignaLink" id="P05084"/>
<dbReference type="BioGRID-ORCS" id="41032">
    <property type="hits" value="0 hits in 1 CRISPR screen"/>
</dbReference>
<dbReference type="GenomeRNAi" id="41032"/>
<dbReference type="PRO" id="PR:P05084"/>
<dbReference type="Proteomes" id="UP000000803">
    <property type="component" value="Chromosome 3R"/>
</dbReference>
<dbReference type="Bgee" id="FBgn0001180">
    <property type="expression patterns" value="Expressed in cleaving embryo and 68 other cell types or tissues"/>
</dbReference>
<dbReference type="ExpressionAtlas" id="P05084">
    <property type="expression patterns" value="baseline and differential"/>
</dbReference>
<dbReference type="GO" id="GO:0005634">
    <property type="term" value="C:nucleus"/>
    <property type="evidence" value="ECO:0007005"/>
    <property type="project" value="FlyBase"/>
</dbReference>
<dbReference type="GO" id="GO:0003700">
    <property type="term" value="F:DNA-binding transcription factor activity"/>
    <property type="evidence" value="ECO:0000314"/>
    <property type="project" value="FlyBase"/>
</dbReference>
<dbReference type="GO" id="GO:0000981">
    <property type="term" value="F:DNA-binding transcription factor activity, RNA polymerase II-specific"/>
    <property type="evidence" value="ECO:0000314"/>
    <property type="project" value="FlyBase"/>
</dbReference>
<dbReference type="GO" id="GO:0000978">
    <property type="term" value="F:RNA polymerase II cis-regulatory region sequence-specific DNA binding"/>
    <property type="evidence" value="ECO:0000314"/>
    <property type="project" value="FlyBase"/>
</dbReference>
<dbReference type="GO" id="GO:0000977">
    <property type="term" value="F:RNA polymerase II transcription regulatory region sequence-specific DNA binding"/>
    <property type="evidence" value="ECO:0000318"/>
    <property type="project" value="GO_Central"/>
</dbReference>
<dbReference type="GO" id="GO:0043565">
    <property type="term" value="F:sequence-specific DNA binding"/>
    <property type="evidence" value="ECO:0000314"/>
    <property type="project" value="FlyBase"/>
</dbReference>
<dbReference type="GO" id="GO:0008270">
    <property type="term" value="F:zinc ion binding"/>
    <property type="evidence" value="ECO:0007669"/>
    <property type="project" value="UniProtKB-KW"/>
</dbReference>
<dbReference type="GO" id="GO:0009948">
    <property type="term" value="P:anterior/posterior axis specification"/>
    <property type="evidence" value="ECO:0000315"/>
    <property type="project" value="FlyBase"/>
</dbReference>
<dbReference type="GO" id="GO:0007402">
    <property type="term" value="P:ganglion mother cell fate determination"/>
    <property type="evidence" value="ECO:0000304"/>
    <property type="project" value="FlyBase"/>
</dbReference>
<dbReference type="GO" id="GO:0048699">
    <property type="term" value="P:generation of neurons"/>
    <property type="evidence" value="ECO:0000315"/>
    <property type="project" value="FlyBase"/>
</dbReference>
<dbReference type="GO" id="GO:0000122">
    <property type="term" value="P:negative regulation of transcription by RNA polymerase II"/>
    <property type="evidence" value="ECO:0000314"/>
    <property type="project" value="FlyBase"/>
</dbReference>
<dbReference type="GO" id="GO:0007400">
    <property type="term" value="P:neuroblast fate determination"/>
    <property type="evidence" value="ECO:0000315"/>
    <property type="project" value="FlyBase"/>
</dbReference>
<dbReference type="GO" id="GO:0045944">
    <property type="term" value="P:positive regulation of transcription by RNA polymerase II"/>
    <property type="evidence" value="ECO:0000314"/>
    <property type="project" value="FlyBase"/>
</dbReference>
<dbReference type="GO" id="GO:0035289">
    <property type="term" value="P:posterior head segmentation"/>
    <property type="evidence" value="ECO:0000304"/>
    <property type="project" value="FlyBase"/>
</dbReference>
<dbReference type="GO" id="GO:0040034">
    <property type="term" value="P:regulation of development, heterochronic"/>
    <property type="evidence" value="ECO:0000304"/>
    <property type="project" value="FlyBase"/>
</dbReference>
<dbReference type="GO" id="GO:2000177">
    <property type="term" value="P:regulation of neural precursor cell proliferation"/>
    <property type="evidence" value="ECO:0000315"/>
    <property type="project" value="FlyBase"/>
</dbReference>
<dbReference type="GO" id="GO:0050767">
    <property type="term" value="P:regulation of neurogenesis"/>
    <property type="evidence" value="ECO:0000315"/>
    <property type="project" value="FlyBase"/>
</dbReference>
<dbReference type="GO" id="GO:0006357">
    <property type="term" value="P:regulation of transcription by RNA polymerase II"/>
    <property type="evidence" value="ECO:0000318"/>
    <property type="project" value="GO_Central"/>
</dbReference>
<dbReference type="GO" id="GO:0007431">
    <property type="term" value="P:salivary gland development"/>
    <property type="evidence" value="ECO:0000304"/>
    <property type="project" value="FlyBase"/>
</dbReference>
<dbReference type="GO" id="GO:0035290">
    <property type="term" value="P:trunk segmentation"/>
    <property type="evidence" value="ECO:0000304"/>
    <property type="project" value="FlyBase"/>
</dbReference>
<dbReference type="GO" id="GO:0007419">
    <property type="term" value="P:ventral cord development"/>
    <property type="evidence" value="ECO:0000303"/>
    <property type="project" value="FlyBase"/>
</dbReference>
<dbReference type="GO" id="GO:0007354">
    <property type="term" value="P:zygotic determination of anterior/posterior axis, embryo"/>
    <property type="evidence" value="ECO:0000304"/>
    <property type="project" value="FlyBase"/>
</dbReference>
<dbReference type="FunFam" id="3.30.160.60:FF:001301">
    <property type="entry name" value="Blast:Protein hunchback"/>
    <property type="match status" value="1"/>
</dbReference>
<dbReference type="FunFam" id="3.30.160.60:FF:001482">
    <property type="entry name" value="Hunchback"/>
    <property type="match status" value="1"/>
</dbReference>
<dbReference type="Gene3D" id="3.30.160.60">
    <property type="entry name" value="Classic Zinc Finger"/>
    <property type="match status" value="3"/>
</dbReference>
<dbReference type="InterPro" id="IPR036236">
    <property type="entry name" value="Znf_C2H2_sf"/>
</dbReference>
<dbReference type="InterPro" id="IPR013087">
    <property type="entry name" value="Znf_C2H2_type"/>
</dbReference>
<dbReference type="PANTHER" id="PTHR24392:SF49">
    <property type="entry name" value="PROTEIN HUNCHBACK"/>
    <property type="match status" value="1"/>
</dbReference>
<dbReference type="PANTHER" id="PTHR24392">
    <property type="entry name" value="ZINC FINGER PROTEIN"/>
    <property type="match status" value="1"/>
</dbReference>
<dbReference type="Pfam" id="PF00096">
    <property type="entry name" value="zf-C2H2"/>
    <property type="match status" value="2"/>
</dbReference>
<dbReference type="SMART" id="SM00355">
    <property type="entry name" value="ZnF_C2H2"/>
    <property type="match status" value="6"/>
</dbReference>
<dbReference type="SUPFAM" id="SSF57667">
    <property type="entry name" value="beta-beta-alpha zinc fingers"/>
    <property type="match status" value="3"/>
</dbReference>
<dbReference type="PROSITE" id="PS00028">
    <property type="entry name" value="ZINC_FINGER_C2H2_1"/>
    <property type="match status" value="3"/>
</dbReference>
<dbReference type="PROSITE" id="PS50157">
    <property type="entry name" value="ZINC_FINGER_C2H2_2"/>
    <property type="match status" value="2"/>
</dbReference>
<comment type="function">
    <text>Gap class segmentation protein that controls development of head structures.</text>
</comment>
<comment type="subcellular location">
    <subcellularLocation>
        <location>Nucleus</location>
    </subcellularLocation>
</comment>
<comment type="tissue specificity">
    <text evidence="4">In embryo, expression of maternal transcript is highest in anterior region. Zygotic transcript is expressed in anterior region until the beginning of gastrulation and in posterior region until early gastrulation. After this, it is expressed in developing nervous system.</text>
</comment>
<comment type="developmental stage">
    <text>Expressed maternally and zygotically. Expression of the maternal transcript decreases until embryonic stage 14, zygotic transcript is first detected at stage 11.</text>
</comment>
<comment type="similarity">
    <text evidence="6">Belongs to the hunchback C2H2-type zinc-finger protein family.</text>
</comment>